<feature type="chain" id="PRO_1000206549" description="Large ribosomal subunit protein bL9">
    <location>
        <begin position="1"/>
        <end position="147"/>
    </location>
</feature>
<proteinExistence type="inferred from homology"/>
<gene>
    <name evidence="1" type="primary">rplI</name>
    <name type="ordered locus">EAT1b_1749</name>
</gene>
<sequence>MKVILKVDVKGQGKAGEVKNVADAYAKNVLFKKNLAVEATPGNLKAFAAKERRAEEAAEEELNEAKRLKEKLEKETIAVTTKAGEGGRVFGSVTSKQIADALKSMGYKIDKRKIELEHPIKALGFTKVPVKLHHDVVATLNVHVQEA</sequence>
<name>RL9_EXISA</name>
<reference key="1">
    <citation type="journal article" date="2011" name="J. Bacteriol.">
        <title>Complete genome sequence of the Thermophilic Bacterium Exiguobacterium sp. AT1b.</title>
        <authorList>
            <person name="Vishnivetskaya T.A."/>
            <person name="Lucas S."/>
            <person name="Copeland A."/>
            <person name="Lapidus A."/>
            <person name="Glavina del Rio T."/>
            <person name="Dalin E."/>
            <person name="Tice H."/>
            <person name="Bruce D.C."/>
            <person name="Goodwin L.A."/>
            <person name="Pitluck S."/>
            <person name="Saunders E."/>
            <person name="Brettin T."/>
            <person name="Detter C."/>
            <person name="Han C."/>
            <person name="Larimer F."/>
            <person name="Land M.L."/>
            <person name="Hauser L.J."/>
            <person name="Kyrpides N.C."/>
            <person name="Ovchinnikova G."/>
            <person name="Kathariou S."/>
            <person name="Ramaley R.F."/>
            <person name="Rodrigues D.F."/>
            <person name="Hendrix C."/>
            <person name="Richardson P."/>
            <person name="Tiedje J.M."/>
        </authorList>
    </citation>
    <scope>NUCLEOTIDE SEQUENCE [LARGE SCALE GENOMIC DNA]</scope>
    <source>
        <strain>ATCC BAA-1283 / AT1b</strain>
    </source>
</reference>
<accession>C4L012</accession>
<organism>
    <name type="scientific">Exiguobacterium sp. (strain ATCC BAA-1283 / AT1b)</name>
    <dbReference type="NCBI Taxonomy" id="360911"/>
    <lineage>
        <taxon>Bacteria</taxon>
        <taxon>Bacillati</taxon>
        <taxon>Bacillota</taxon>
        <taxon>Bacilli</taxon>
        <taxon>Bacillales</taxon>
        <taxon>Bacillales Family XII. Incertae Sedis</taxon>
        <taxon>Exiguobacterium</taxon>
    </lineage>
</organism>
<comment type="function">
    <text evidence="1">Binds to the 23S rRNA.</text>
</comment>
<comment type="similarity">
    <text evidence="1">Belongs to the bacterial ribosomal protein bL9 family.</text>
</comment>
<dbReference type="EMBL" id="CP001615">
    <property type="protein sequence ID" value="ACQ70675.1"/>
    <property type="molecule type" value="Genomic_DNA"/>
</dbReference>
<dbReference type="RefSeq" id="WP_015880234.1">
    <property type="nucleotide sequence ID" value="NC_012673.1"/>
</dbReference>
<dbReference type="SMR" id="C4L012"/>
<dbReference type="STRING" id="360911.EAT1b_1749"/>
<dbReference type="KEGG" id="eat:EAT1b_1749"/>
<dbReference type="eggNOG" id="COG0359">
    <property type="taxonomic scope" value="Bacteria"/>
</dbReference>
<dbReference type="HOGENOM" id="CLU_078938_3_2_9"/>
<dbReference type="OrthoDB" id="9788336at2"/>
<dbReference type="Proteomes" id="UP000000716">
    <property type="component" value="Chromosome"/>
</dbReference>
<dbReference type="GO" id="GO:1990904">
    <property type="term" value="C:ribonucleoprotein complex"/>
    <property type="evidence" value="ECO:0007669"/>
    <property type="project" value="UniProtKB-KW"/>
</dbReference>
<dbReference type="GO" id="GO:0005840">
    <property type="term" value="C:ribosome"/>
    <property type="evidence" value="ECO:0007669"/>
    <property type="project" value="UniProtKB-KW"/>
</dbReference>
<dbReference type="GO" id="GO:0019843">
    <property type="term" value="F:rRNA binding"/>
    <property type="evidence" value="ECO:0007669"/>
    <property type="project" value="UniProtKB-UniRule"/>
</dbReference>
<dbReference type="GO" id="GO:0003735">
    <property type="term" value="F:structural constituent of ribosome"/>
    <property type="evidence" value="ECO:0007669"/>
    <property type="project" value="InterPro"/>
</dbReference>
<dbReference type="GO" id="GO:0006412">
    <property type="term" value="P:translation"/>
    <property type="evidence" value="ECO:0007669"/>
    <property type="project" value="UniProtKB-UniRule"/>
</dbReference>
<dbReference type="FunFam" id="3.10.430.100:FF:000002">
    <property type="entry name" value="50S ribosomal protein L9"/>
    <property type="match status" value="1"/>
</dbReference>
<dbReference type="Gene3D" id="3.10.430.100">
    <property type="entry name" value="Ribosomal protein L9, C-terminal domain"/>
    <property type="match status" value="1"/>
</dbReference>
<dbReference type="Gene3D" id="3.40.5.10">
    <property type="entry name" value="Ribosomal protein L9, N-terminal domain"/>
    <property type="match status" value="1"/>
</dbReference>
<dbReference type="HAMAP" id="MF_00503">
    <property type="entry name" value="Ribosomal_bL9"/>
    <property type="match status" value="1"/>
</dbReference>
<dbReference type="InterPro" id="IPR000244">
    <property type="entry name" value="Ribosomal_bL9"/>
</dbReference>
<dbReference type="InterPro" id="IPR009027">
    <property type="entry name" value="Ribosomal_bL9/RNase_H1_N"/>
</dbReference>
<dbReference type="InterPro" id="IPR020594">
    <property type="entry name" value="Ribosomal_bL9_bac/chp"/>
</dbReference>
<dbReference type="InterPro" id="IPR020069">
    <property type="entry name" value="Ribosomal_bL9_C"/>
</dbReference>
<dbReference type="InterPro" id="IPR036791">
    <property type="entry name" value="Ribosomal_bL9_C_sf"/>
</dbReference>
<dbReference type="InterPro" id="IPR020070">
    <property type="entry name" value="Ribosomal_bL9_N"/>
</dbReference>
<dbReference type="InterPro" id="IPR036935">
    <property type="entry name" value="Ribosomal_bL9_N_sf"/>
</dbReference>
<dbReference type="NCBIfam" id="TIGR00158">
    <property type="entry name" value="L9"/>
    <property type="match status" value="1"/>
</dbReference>
<dbReference type="PANTHER" id="PTHR21368">
    <property type="entry name" value="50S RIBOSOMAL PROTEIN L9"/>
    <property type="match status" value="1"/>
</dbReference>
<dbReference type="Pfam" id="PF03948">
    <property type="entry name" value="Ribosomal_L9_C"/>
    <property type="match status" value="1"/>
</dbReference>
<dbReference type="Pfam" id="PF01281">
    <property type="entry name" value="Ribosomal_L9_N"/>
    <property type="match status" value="1"/>
</dbReference>
<dbReference type="SUPFAM" id="SSF55658">
    <property type="entry name" value="L9 N-domain-like"/>
    <property type="match status" value="1"/>
</dbReference>
<dbReference type="SUPFAM" id="SSF55653">
    <property type="entry name" value="Ribosomal protein L9 C-domain"/>
    <property type="match status" value="1"/>
</dbReference>
<keyword id="KW-0687">Ribonucleoprotein</keyword>
<keyword id="KW-0689">Ribosomal protein</keyword>
<keyword id="KW-0694">RNA-binding</keyword>
<keyword id="KW-0699">rRNA-binding</keyword>
<evidence type="ECO:0000255" key="1">
    <source>
        <dbReference type="HAMAP-Rule" id="MF_00503"/>
    </source>
</evidence>
<evidence type="ECO:0000305" key="2"/>
<protein>
    <recommendedName>
        <fullName evidence="1">Large ribosomal subunit protein bL9</fullName>
    </recommendedName>
    <alternativeName>
        <fullName evidence="2">50S ribosomal protein L9</fullName>
    </alternativeName>
</protein>